<keyword id="KW-0067">ATP-binding</keyword>
<keyword id="KW-1015">Disulfide bond</keyword>
<keyword id="KW-0325">Glycoprotein</keyword>
<keyword id="KW-0418">Kinase</keyword>
<keyword id="KW-0472">Membrane</keyword>
<keyword id="KW-0547">Nucleotide-binding</keyword>
<keyword id="KW-0597">Phosphoprotein</keyword>
<keyword id="KW-0656">Proto-oncogene</keyword>
<keyword id="KW-0675">Receptor</keyword>
<keyword id="KW-1185">Reference proteome</keyword>
<keyword id="KW-0677">Repeat</keyword>
<keyword id="KW-0732">Signal</keyword>
<keyword id="KW-0808">Transferase</keyword>
<keyword id="KW-0812">Transmembrane</keyword>
<keyword id="KW-1133">Transmembrane helix</keyword>
<keyword id="KW-0829">Tyrosine-protein kinase</keyword>
<keyword id="KW-0832">Ubl conjugation</keyword>
<proteinExistence type="inferred from homology"/>
<accession>A0M8S8</accession>
<reference key="1">
    <citation type="journal article" date="2003" name="Nature">
        <title>Comparative analyses of multi-species sequences from targeted genomic regions.</title>
        <authorList>
            <person name="Thomas J.W."/>
            <person name="Touchman J.W."/>
            <person name="Blakesley R.W."/>
            <person name="Bouffard G.G."/>
            <person name="Beckstrom-Sternberg S.M."/>
            <person name="Margulies E.H."/>
            <person name="Blanchette M."/>
            <person name="Siepel A.C."/>
            <person name="Thomas P.J."/>
            <person name="McDowell J.C."/>
            <person name="Maskeri B."/>
            <person name="Hansen N.F."/>
            <person name="Schwartz M.S."/>
            <person name="Weber R.J."/>
            <person name="Kent W.J."/>
            <person name="Karolchik D."/>
            <person name="Bruen T.C."/>
            <person name="Bevan R."/>
            <person name="Cutler D.J."/>
            <person name="Schwartz S."/>
            <person name="Elnitski L."/>
            <person name="Idol J.R."/>
            <person name="Prasad A.B."/>
            <person name="Lee-Lin S.-Q."/>
            <person name="Maduro V.V.B."/>
            <person name="Summers T.J."/>
            <person name="Portnoy M.E."/>
            <person name="Dietrich N.L."/>
            <person name="Akhter N."/>
            <person name="Ayele K."/>
            <person name="Benjamin B."/>
            <person name="Cariaga K."/>
            <person name="Brinkley C.P."/>
            <person name="Brooks S.Y."/>
            <person name="Granite S."/>
            <person name="Guan X."/>
            <person name="Gupta J."/>
            <person name="Haghighi P."/>
            <person name="Ho S.-L."/>
            <person name="Huang M.C."/>
            <person name="Karlins E."/>
            <person name="Laric P.L."/>
            <person name="Legaspi R."/>
            <person name="Lim M.J."/>
            <person name="Maduro Q.L."/>
            <person name="Masiello C.A."/>
            <person name="Mastrian S.D."/>
            <person name="McCloskey J.C."/>
            <person name="Pearson R."/>
            <person name="Stantripop S."/>
            <person name="Tiongson E.E."/>
            <person name="Tran J.T."/>
            <person name="Tsurgeon C."/>
            <person name="Vogt J.L."/>
            <person name="Walker M.A."/>
            <person name="Wetherby K.D."/>
            <person name="Wiggins L.S."/>
            <person name="Young A.C."/>
            <person name="Zhang L.-H."/>
            <person name="Osoegawa K."/>
            <person name="Zhu B."/>
            <person name="Zhao B."/>
            <person name="Shu C.L."/>
            <person name="De Jong P.J."/>
            <person name="Lawrence C.E."/>
            <person name="Smit A.F."/>
            <person name="Chakravarti A."/>
            <person name="Haussler D."/>
            <person name="Green P."/>
            <person name="Miller W."/>
            <person name="Green E.D."/>
        </authorList>
    </citation>
    <scope>NUCLEOTIDE SEQUENCE [LARGE SCALE GENOMIC DNA]</scope>
</reference>
<feature type="signal peptide" evidence="4">
    <location>
        <begin position="1"/>
        <end position="24"/>
    </location>
</feature>
<feature type="chain" id="PRO_0000280068" description="Hepatocyte growth factor receptor">
    <location>
        <begin position="25"/>
        <end position="1382"/>
    </location>
</feature>
<feature type="topological domain" description="Extracellular" evidence="4">
    <location>
        <begin position="25"/>
        <end position="933"/>
    </location>
</feature>
<feature type="transmembrane region" description="Helical" evidence="4">
    <location>
        <begin position="934"/>
        <end position="956"/>
    </location>
</feature>
<feature type="topological domain" description="Cytoplasmic" evidence="4">
    <location>
        <begin position="957"/>
        <end position="1382"/>
    </location>
</feature>
<feature type="domain" description="Sema" evidence="6">
    <location>
        <begin position="27"/>
        <end position="516"/>
    </location>
</feature>
<feature type="domain" description="IPT/TIG 1">
    <location>
        <begin position="564"/>
        <end position="656"/>
    </location>
</feature>
<feature type="domain" description="IPT/TIG 2">
    <location>
        <begin position="658"/>
        <end position="740"/>
    </location>
</feature>
<feature type="domain" description="IPT/TIG 3">
    <location>
        <begin position="743"/>
        <end position="837"/>
    </location>
</feature>
<feature type="domain" description="Protein kinase" evidence="5">
    <location>
        <begin position="1079"/>
        <end position="1346"/>
    </location>
</feature>
<feature type="region of interest" description="Interaction with RANBP9" evidence="1">
    <location>
        <begin position="1213"/>
        <end position="1382"/>
    </location>
</feature>
<feature type="region of interest" description="Interaction with MUC20" evidence="1">
    <location>
        <begin position="1321"/>
        <end position="1360"/>
    </location>
</feature>
<feature type="active site" description="Proton acceptor" evidence="5 7">
    <location>
        <position position="1205"/>
    </location>
</feature>
<feature type="binding site" evidence="5">
    <location>
        <begin position="1085"/>
        <end position="1093"/>
    </location>
    <ligand>
        <name>ATP</name>
        <dbReference type="ChEBI" id="CHEBI:30616"/>
    </ligand>
</feature>
<feature type="binding site" evidence="5">
    <location>
        <position position="1111"/>
    </location>
    <ligand>
        <name>ATP</name>
        <dbReference type="ChEBI" id="CHEBI:30616"/>
    </ligand>
</feature>
<feature type="site" description="Cleavage" evidence="4">
    <location>
        <begin position="308"/>
        <end position="309"/>
    </location>
</feature>
<feature type="modified residue" description="Phosphoserine" evidence="2">
    <location>
        <position position="967"/>
    </location>
</feature>
<feature type="modified residue" description="Phosphothreonine" evidence="2">
    <location>
        <position position="978"/>
    </location>
</feature>
<feature type="modified residue" description="Phosphoserine" evidence="2">
    <location>
        <position position="991"/>
    </location>
</feature>
<feature type="modified residue" description="Phosphoserine" evidence="2">
    <location>
        <position position="998"/>
    </location>
</feature>
<feature type="modified residue" description="Phosphoserine" evidence="2">
    <location>
        <position position="1001"/>
    </location>
</feature>
<feature type="modified residue" description="Phosphotyrosine" evidence="2">
    <location>
        <position position="1004"/>
    </location>
</feature>
<feature type="modified residue" description="Phosphotyrosine" evidence="2">
    <location>
        <position position="1231"/>
    </location>
</feature>
<feature type="modified residue" description="Phosphotyrosine; by autocatalysis" evidence="2">
    <location>
        <position position="1235"/>
    </location>
</feature>
<feature type="modified residue" description="Phosphotyrosine; by autocatalysis" evidence="2">
    <location>
        <position position="1236"/>
    </location>
</feature>
<feature type="modified residue" description="Phosphothreonine" evidence="2">
    <location>
        <position position="1290"/>
    </location>
</feature>
<feature type="modified residue" description="Phosphotyrosine; by autocatalysis" evidence="2">
    <location>
        <position position="1350"/>
    </location>
</feature>
<feature type="modified residue" description="Phosphotyrosine; by autocatalysis" evidence="2">
    <location>
        <position position="1357"/>
    </location>
</feature>
<feature type="modified residue" description="Phosphotyrosine" evidence="2">
    <location>
        <position position="1366"/>
    </location>
</feature>
<feature type="glycosylation site" description="N-linked (GlcNAc...) asparagine" evidence="4">
    <location>
        <position position="45"/>
    </location>
</feature>
<feature type="glycosylation site" description="N-linked (GlcNAc...) asparagine" evidence="4">
    <location>
        <position position="106"/>
    </location>
</feature>
<feature type="glycosylation site" description="N-linked (GlcNAc...) asparagine" evidence="4">
    <location>
        <position position="203"/>
    </location>
</feature>
<feature type="glycosylation site" description="N-linked (GlcNAc...) asparagine" evidence="4">
    <location>
        <position position="359"/>
    </location>
</feature>
<feature type="glycosylation site" description="N-linked (GlcNAc...) asparagine" evidence="4">
    <location>
        <position position="400"/>
    </location>
</feature>
<feature type="glycosylation site" description="N-linked (GlcNAc...) asparagine" evidence="4">
    <location>
        <position position="406"/>
    </location>
</feature>
<feature type="glycosylation site" description="O-linked (Man) threonine" evidence="2">
    <location>
        <position position="583"/>
    </location>
</feature>
<feature type="glycosylation site" description="N-linked (GlcNAc...) asparagine" evidence="4">
    <location>
        <position position="608"/>
    </location>
</feature>
<feature type="glycosylation site" description="N-linked (GlcNAc...) asparagine" evidence="4">
    <location>
        <position position="636"/>
    </location>
</feature>
<feature type="glycosylation site" description="O-linked (Man) threonine" evidence="2">
    <location>
        <position position="677"/>
    </location>
</feature>
<feature type="glycosylation site" description="O-linked (Man) threonine" evidence="2">
    <location>
        <position position="762"/>
    </location>
</feature>
<feature type="glycosylation site" description="N-linked (GlcNAc...) asparagine" evidence="4">
    <location>
        <position position="786"/>
    </location>
</feature>
<feature type="glycosylation site" description="N-linked (GlcNAc...) asparagine" evidence="4">
    <location>
        <position position="880"/>
    </location>
</feature>
<feature type="glycosylation site" description="N-linked (GlcNAc...) asparagine" evidence="4">
    <location>
        <position position="931"/>
    </location>
</feature>
<feature type="disulfide bond" evidence="6">
    <location>
        <begin position="95"/>
        <end position="101"/>
    </location>
</feature>
<feature type="disulfide bond" evidence="6">
    <location>
        <begin position="98"/>
        <end position="160"/>
    </location>
</feature>
<feature type="disulfide bond" evidence="6">
    <location>
        <begin position="133"/>
        <end position="141"/>
    </location>
</feature>
<feature type="disulfide bond" evidence="6">
    <location>
        <begin position="173"/>
        <end position="176"/>
    </location>
</feature>
<feature type="disulfide bond" evidence="6">
    <location>
        <begin position="299"/>
        <end position="364"/>
    </location>
</feature>
<feature type="disulfide bond" evidence="6">
    <location>
        <begin position="386"/>
        <end position="398"/>
    </location>
</feature>
<feature type="disulfide bond" evidence="6">
    <location>
        <begin position="521"/>
        <end position="539"/>
    </location>
</feature>
<feature type="disulfide bond" evidence="6">
    <location>
        <begin position="527"/>
        <end position="562"/>
    </location>
</feature>
<feature type="disulfide bond" evidence="6">
    <location>
        <begin position="530"/>
        <end position="546"/>
    </location>
</feature>
<feature type="disulfide bond" evidence="6">
    <location>
        <begin position="542"/>
        <end position="552"/>
    </location>
</feature>
<name>MET_FELCA</name>
<evidence type="ECO:0000250" key="1"/>
<evidence type="ECO:0000250" key="2">
    <source>
        <dbReference type="UniProtKB" id="P08581"/>
    </source>
</evidence>
<evidence type="ECO:0000250" key="3">
    <source>
        <dbReference type="UniProtKB" id="P16056"/>
    </source>
</evidence>
<evidence type="ECO:0000255" key="4"/>
<evidence type="ECO:0000255" key="5">
    <source>
        <dbReference type="PROSITE-ProRule" id="PRU00159"/>
    </source>
</evidence>
<evidence type="ECO:0000255" key="6">
    <source>
        <dbReference type="PROSITE-ProRule" id="PRU00352"/>
    </source>
</evidence>
<evidence type="ECO:0000255" key="7">
    <source>
        <dbReference type="PROSITE-ProRule" id="PRU10028"/>
    </source>
</evidence>
<dbReference type="EC" id="2.7.10.1"/>
<dbReference type="EMBL" id="DP000234">
    <property type="protein sequence ID" value="AAR16231.1"/>
    <property type="molecule type" value="Genomic_DNA"/>
</dbReference>
<dbReference type="RefSeq" id="NP_001162167.1">
    <property type="nucleotide sequence ID" value="NM_001168696.1"/>
</dbReference>
<dbReference type="RefSeq" id="XP_044897191.1">
    <property type="nucleotide sequence ID" value="XM_045041256.1"/>
</dbReference>
<dbReference type="SMR" id="A0M8S8"/>
<dbReference type="FunCoup" id="A0M8S8">
    <property type="interactions" value="78"/>
</dbReference>
<dbReference type="STRING" id="9685.ENSFCAP00000060432"/>
<dbReference type="GlyCosmos" id="A0M8S8">
    <property type="glycosylation" value="11 sites, No reported glycans"/>
</dbReference>
<dbReference type="PaxDb" id="9685-ENSFCAP00000008842"/>
<dbReference type="Ensembl" id="ENSFCAT00000085048.1">
    <property type="protein sequence ID" value="ENSFCAP00000060432.1"/>
    <property type="gene ID" value="ENSFCAG00000009534.6"/>
</dbReference>
<dbReference type="GeneID" id="493669"/>
<dbReference type="KEGG" id="fca:493669"/>
<dbReference type="CTD" id="4233"/>
<dbReference type="VGNC" id="VGNC:82444">
    <property type="gene designation" value="MET"/>
</dbReference>
<dbReference type="eggNOG" id="KOG1095">
    <property type="taxonomic scope" value="Eukaryota"/>
</dbReference>
<dbReference type="eggNOG" id="KOG3610">
    <property type="taxonomic scope" value="Eukaryota"/>
</dbReference>
<dbReference type="GeneTree" id="ENSGT00940000158022"/>
<dbReference type="HOGENOM" id="CLU_005158_0_0_1"/>
<dbReference type="InParanoid" id="A0M8S8"/>
<dbReference type="OMA" id="DEEPGQC"/>
<dbReference type="OrthoDB" id="9985181at2759"/>
<dbReference type="Proteomes" id="UP000011712">
    <property type="component" value="Chromosome A2"/>
</dbReference>
<dbReference type="Bgee" id="ENSFCAG00000009534">
    <property type="expression patterns" value="Expressed in liver and 11 other cell types or tissues"/>
</dbReference>
<dbReference type="GO" id="GO:0009925">
    <property type="term" value="C:basal plasma membrane"/>
    <property type="evidence" value="ECO:0000318"/>
    <property type="project" value="GO_Central"/>
</dbReference>
<dbReference type="GO" id="GO:0005886">
    <property type="term" value="C:plasma membrane"/>
    <property type="evidence" value="ECO:0000318"/>
    <property type="project" value="GO_Central"/>
</dbReference>
<dbReference type="GO" id="GO:0043235">
    <property type="term" value="C:receptor complex"/>
    <property type="evidence" value="ECO:0000318"/>
    <property type="project" value="GO_Central"/>
</dbReference>
<dbReference type="GO" id="GO:0005524">
    <property type="term" value="F:ATP binding"/>
    <property type="evidence" value="ECO:0007669"/>
    <property type="project" value="UniProtKB-KW"/>
</dbReference>
<dbReference type="GO" id="GO:0005008">
    <property type="term" value="F:hepatocyte growth factor receptor activity"/>
    <property type="evidence" value="ECO:0000318"/>
    <property type="project" value="GO_Central"/>
</dbReference>
<dbReference type="GO" id="GO:0017154">
    <property type="term" value="F:semaphorin receptor activity"/>
    <property type="evidence" value="ECO:0007669"/>
    <property type="project" value="InterPro"/>
</dbReference>
<dbReference type="GO" id="GO:0007169">
    <property type="term" value="P:cell surface receptor protein tyrosine kinase signaling pathway"/>
    <property type="evidence" value="ECO:0000318"/>
    <property type="project" value="GO_Central"/>
</dbReference>
<dbReference type="GO" id="GO:0001889">
    <property type="term" value="P:liver development"/>
    <property type="evidence" value="ECO:0000318"/>
    <property type="project" value="GO_Central"/>
</dbReference>
<dbReference type="GO" id="GO:0030182">
    <property type="term" value="P:neuron differentiation"/>
    <property type="evidence" value="ECO:0000318"/>
    <property type="project" value="GO_Central"/>
</dbReference>
<dbReference type="GO" id="GO:0031016">
    <property type="term" value="P:pancreas development"/>
    <property type="evidence" value="ECO:0000318"/>
    <property type="project" value="GO_Central"/>
</dbReference>
<dbReference type="GO" id="GO:0050918">
    <property type="term" value="P:positive chemotaxis"/>
    <property type="evidence" value="ECO:0000250"/>
    <property type="project" value="UniProtKB"/>
</dbReference>
<dbReference type="GO" id="GO:2001028">
    <property type="term" value="P:positive regulation of endothelial cell chemotaxis"/>
    <property type="evidence" value="ECO:0000250"/>
    <property type="project" value="UniProtKB"/>
</dbReference>
<dbReference type="GO" id="GO:0071526">
    <property type="term" value="P:semaphorin-plexin signaling pathway"/>
    <property type="evidence" value="ECO:0000250"/>
    <property type="project" value="UniProtKB"/>
</dbReference>
<dbReference type="CDD" id="cd00603">
    <property type="entry name" value="IPT_PCSR"/>
    <property type="match status" value="1"/>
</dbReference>
<dbReference type="CDD" id="cd01180">
    <property type="entry name" value="IPT_plexin_repeat1"/>
    <property type="match status" value="1"/>
</dbReference>
<dbReference type="CDD" id="cd05058">
    <property type="entry name" value="PTKc_Met_Ron"/>
    <property type="match status" value="1"/>
</dbReference>
<dbReference type="FunFam" id="1.10.510.10:FF:000093">
    <property type="entry name" value="Hepatocyte growth factor receptor"/>
    <property type="match status" value="1"/>
</dbReference>
<dbReference type="FunFam" id="2.130.10.10:FF:000088">
    <property type="entry name" value="Hepatocyte growth factor receptor"/>
    <property type="match status" value="1"/>
</dbReference>
<dbReference type="FunFam" id="2.60.40.10:FF:000213">
    <property type="entry name" value="Hepatocyte growth factor receptor"/>
    <property type="match status" value="1"/>
</dbReference>
<dbReference type="FunFam" id="2.60.40.10:FF:000400">
    <property type="entry name" value="Hepatocyte growth factor receptor"/>
    <property type="match status" value="1"/>
</dbReference>
<dbReference type="FunFam" id="2.60.40.10:FF:002708">
    <property type="entry name" value="Hepatocyte growth factor receptor"/>
    <property type="match status" value="1"/>
</dbReference>
<dbReference type="FunFam" id="3.30.200.20:FF:000188">
    <property type="entry name" value="Hepatocyte growth factor receptor"/>
    <property type="match status" value="1"/>
</dbReference>
<dbReference type="Gene3D" id="2.60.40.10">
    <property type="entry name" value="Immunoglobulins"/>
    <property type="match status" value="3"/>
</dbReference>
<dbReference type="Gene3D" id="3.30.200.20">
    <property type="entry name" value="Phosphorylase Kinase, domain 1"/>
    <property type="match status" value="1"/>
</dbReference>
<dbReference type="Gene3D" id="1.10.510.10">
    <property type="entry name" value="Transferase(Phosphotransferase) domain 1"/>
    <property type="match status" value="1"/>
</dbReference>
<dbReference type="Gene3D" id="2.130.10.10">
    <property type="entry name" value="YVTN repeat-like/Quinoprotein amine dehydrogenase"/>
    <property type="match status" value="1"/>
</dbReference>
<dbReference type="InterPro" id="IPR013783">
    <property type="entry name" value="Ig-like_fold"/>
</dbReference>
<dbReference type="InterPro" id="IPR014756">
    <property type="entry name" value="Ig_E-set"/>
</dbReference>
<dbReference type="InterPro" id="IPR002909">
    <property type="entry name" value="IPT_dom"/>
</dbReference>
<dbReference type="InterPro" id="IPR011009">
    <property type="entry name" value="Kinase-like_dom_sf"/>
</dbReference>
<dbReference type="InterPro" id="IPR031148">
    <property type="entry name" value="Plexin"/>
</dbReference>
<dbReference type="InterPro" id="IPR002165">
    <property type="entry name" value="Plexin_repeat"/>
</dbReference>
<dbReference type="InterPro" id="IPR000719">
    <property type="entry name" value="Prot_kinase_dom"/>
</dbReference>
<dbReference type="InterPro" id="IPR017441">
    <property type="entry name" value="Protein_kinase_ATP_BS"/>
</dbReference>
<dbReference type="InterPro" id="IPR016201">
    <property type="entry name" value="PSI"/>
</dbReference>
<dbReference type="InterPro" id="IPR001627">
    <property type="entry name" value="Semap_dom"/>
</dbReference>
<dbReference type="InterPro" id="IPR036352">
    <property type="entry name" value="Semap_dom_sf"/>
</dbReference>
<dbReference type="InterPro" id="IPR001245">
    <property type="entry name" value="Ser-Thr/Tyr_kinase_cat_dom"/>
</dbReference>
<dbReference type="InterPro" id="IPR008266">
    <property type="entry name" value="Tyr_kinase_AS"/>
</dbReference>
<dbReference type="InterPro" id="IPR020635">
    <property type="entry name" value="Tyr_kinase_cat_dom"/>
</dbReference>
<dbReference type="InterPro" id="IPR016244">
    <property type="entry name" value="Tyr_kinase_HGF/MSP_rcpt"/>
</dbReference>
<dbReference type="InterPro" id="IPR015943">
    <property type="entry name" value="WD40/YVTN_repeat-like_dom_sf"/>
</dbReference>
<dbReference type="PANTHER" id="PTHR22625:SF61">
    <property type="entry name" value="HEPATOCYTE GROWTH FACTOR RECEPTOR"/>
    <property type="match status" value="1"/>
</dbReference>
<dbReference type="PANTHER" id="PTHR22625">
    <property type="entry name" value="PLEXIN"/>
    <property type="match status" value="1"/>
</dbReference>
<dbReference type="Pfam" id="PF07714">
    <property type="entry name" value="PK_Tyr_Ser-Thr"/>
    <property type="match status" value="1"/>
</dbReference>
<dbReference type="Pfam" id="PF01437">
    <property type="entry name" value="PSI"/>
    <property type="match status" value="1"/>
</dbReference>
<dbReference type="Pfam" id="PF01403">
    <property type="entry name" value="Sema"/>
    <property type="match status" value="1"/>
</dbReference>
<dbReference type="Pfam" id="PF01833">
    <property type="entry name" value="TIG"/>
    <property type="match status" value="3"/>
</dbReference>
<dbReference type="PIRSF" id="PIRSF000617">
    <property type="entry name" value="TyrPK_HGF-R"/>
    <property type="match status" value="1"/>
</dbReference>
<dbReference type="PRINTS" id="PR00109">
    <property type="entry name" value="TYRKINASE"/>
</dbReference>
<dbReference type="SMART" id="SM00429">
    <property type="entry name" value="IPT"/>
    <property type="match status" value="4"/>
</dbReference>
<dbReference type="SMART" id="SM00423">
    <property type="entry name" value="PSI"/>
    <property type="match status" value="1"/>
</dbReference>
<dbReference type="SMART" id="SM00630">
    <property type="entry name" value="Sema"/>
    <property type="match status" value="1"/>
</dbReference>
<dbReference type="SMART" id="SM00219">
    <property type="entry name" value="TyrKc"/>
    <property type="match status" value="1"/>
</dbReference>
<dbReference type="SUPFAM" id="SSF81296">
    <property type="entry name" value="E set domains"/>
    <property type="match status" value="3"/>
</dbReference>
<dbReference type="SUPFAM" id="SSF103575">
    <property type="entry name" value="Plexin repeat"/>
    <property type="match status" value="1"/>
</dbReference>
<dbReference type="SUPFAM" id="SSF56112">
    <property type="entry name" value="Protein kinase-like (PK-like)"/>
    <property type="match status" value="1"/>
</dbReference>
<dbReference type="SUPFAM" id="SSF101912">
    <property type="entry name" value="Sema domain"/>
    <property type="match status" value="1"/>
</dbReference>
<dbReference type="PROSITE" id="PS00107">
    <property type="entry name" value="PROTEIN_KINASE_ATP"/>
    <property type="match status" value="1"/>
</dbReference>
<dbReference type="PROSITE" id="PS50011">
    <property type="entry name" value="PROTEIN_KINASE_DOM"/>
    <property type="match status" value="1"/>
</dbReference>
<dbReference type="PROSITE" id="PS00109">
    <property type="entry name" value="PROTEIN_KINASE_TYR"/>
    <property type="match status" value="1"/>
</dbReference>
<dbReference type="PROSITE" id="PS51004">
    <property type="entry name" value="SEMA"/>
    <property type="match status" value="1"/>
</dbReference>
<comment type="function">
    <text evidence="1">Receptor tyrosine kinase that transduces signals from the extracellular matrix into the cytoplasm by binding to hepatocyte growth factor/HGF ligand. Regulates many physiological processes including proliferation, scattering, morphogenesis and survival. Ligand binding at the cell surface induces autophosphorylation of MET on its intracellular domain that provides docking sites for downstream signaling molecules. Following activation by ligand, interacts with the PI3-kinase subunit PIK3R1, PLCG1, SRC, GRB2, STAT3 or the adapter GAB1. Recruitment of these downstream effectors by MET leads to the activation of several signaling cascades including the RAS-ERK, PI3 kinase-AKT, or PLCgamma-PKC. The RAS-ERK activation is associated with the morphogenetic effects while PI3K/AKT coordinates prosurvival effects. During embryonic development, MET signaling plays a role in gastrulation, development and migration of muscles and neuronal precursors, angiogenesis and kidney formation. In adults, participates in wound healing as well as organ regeneration and tissue remodeling. Also promotes differentiation and proliferation of hematopoietic cells (By similarity).</text>
</comment>
<comment type="catalytic activity">
    <reaction evidence="7">
        <text>L-tyrosyl-[protein] + ATP = O-phospho-L-tyrosyl-[protein] + ADP + H(+)</text>
        <dbReference type="Rhea" id="RHEA:10596"/>
        <dbReference type="Rhea" id="RHEA-COMP:10136"/>
        <dbReference type="Rhea" id="RHEA-COMP:20101"/>
        <dbReference type="ChEBI" id="CHEBI:15378"/>
        <dbReference type="ChEBI" id="CHEBI:30616"/>
        <dbReference type="ChEBI" id="CHEBI:46858"/>
        <dbReference type="ChEBI" id="CHEBI:61978"/>
        <dbReference type="ChEBI" id="CHEBI:456216"/>
        <dbReference type="EC" id="2.7.10.1"/>
    </reaction>
</comment>
<comment type="activity regulation">
    <text evidence="1">In its inactive state, the C-terminal tail interacts with the catalytic domain and inhibits the kinase activity. Upon ligand binding, the C-terminal tail is displaced and becomes phosphorylated, thus increasing the kinase activity (By similarity).</text>
</comment>
<comment type="subunit">
    <text evidence="2 3">Heterodimer made of an alpha chain (50 kDa) and a beta chain (145 kDa) which are disulfide linked. Binds PLXNB1. Interacts when phosphorylated with downstream effectors including STAT3, PIK3R1, SRC, PCLG1, GRB2 and GAB1. Interacts with SPSB1, SPSB2 and SPSB4. Interacts with INPP5D/SHIP1. When phosphorylated at Tyr-1357, interacts with INPPL1/SHIP2. Interacts with RANBP9 and RANBP10, as well as SPSB1, SPSB2, SPSB3 and SPSB4. SPSB1 binding occurs in the presence and in the absence of HGF, however HGF treatment has a positive effect on this interaction. Interacts with MUC20; prevents interaction with GRB2 and suppresses hepatocyte growth factor-induced cell proliferation. Interacts with GRB10. Interacts with PTPN1 and PTPN2. Interacts with HSP90AA1 and HSP90AB1; the interaction suppresses MET kinase activity. Interacts with tensin TNS3 (By similarity). Interacts (when phosphorylated) with tensin TNS4 (via SH2 domain); the interaction increases MET protein stability by inhibiting MET endocytosis and subsequent lysosomal degradation (By similarity).</text>
</comment>
<comment type="subcellular location">
    <subcellularLocation>
        <location evidence="1">Membrane</location>
        <topology evidence="1">Single-pass type I membrane protein</topology>
    </subcellularLocation>
</comment>
<comment type="domain">
    <text evidence="1">The kinase domain is involved in SPSB1 binding.</text>
</comment>
<comment type="domain">
    <text evidence="1">The beta-propeller Sema domain mediates binding to HGF.</text>
</comment>
<comment type="PTM">
    <text evidence="2">Autophosphorylated in response to ligand binding on Tyr-1235 and Tyr-1236 in the kinase domain leading to further phosphorylation of Tyr-1350 and Tyr-1357 in the C-terminal multifunctional docking site. Dephosphorylated by PTPRJ at Tyr-1350 and Tyr-1366. Dephosphorylated by PTPN1 and PTPN2 (By similarity).</text>
</comment>
<comment type="PTM">
    <text evidence="2">Ubiquitinated. Ubiquitination by CBL regulates the receptor stability and activity through proteasomal degradation (By similarity).</text>
</comment>
<comment type="PTM">
    <text evidence="2">O-mannosylation of IPT/TIG domains by TMEM260 is required for protein maturation. O-mannosylated residues are composed of single mannose glycans that are not elongated or modified.</text>
</comment>
<comment type="similarity">
    <text evidence="5">Belongs to the protein kinase superfamily. Tyr protein kinase family.</text>
</comment>
<organism>
    <name type="scientific">Felis catus</name>
    <name type="common">Cat</name>
    <name type="synonym">Felis silvestris catus</name>
    <dbReference type="NCBI Taxonomy" id="9685"/>
    <lineage>
        <taxon>Eukaryota</taxon>
        <taxon>Metazoa</taxon>
        <taxon>Chordata</taxon>
        <taxon>Craniata</taxon>
        <taxon>Vertebrata</taxon>
        <taxon>Euteleostomi</taxon>
        <taxon>Mammalia</taxon>
        <taxon>Eutheria</taxon>
        <taxon>Laurasiatheria</taxon>
        <taxon>Carnivora</taxon>
        <taxon>Feliformia</taxon>
        <taxon>Felidae</taxon>
        <taxon>Felinae</taxon>
        <taxon>Felis</taxon>
    </lineage>
</organism>
<sequence length="1382" mass="154805">MKAPAVLAPGILVLLFTLVQKSYGECREALVKSEMNVNMKYQLPNFTAETPIQNVVLHKHHIYLGAVNYIYVLNDKDLQKVAEYKTGPVLEHPDCFPCQDCSHKANLSGGVWKDNINMALLIDTYYDDQLISCGSVHRGTCQRHVLPPSNTADILSKVHCMYSPQADEESSHCPDCVVSALGTKVLISEKGRFINFFVGNTINSSYLTDHSLHSISVRRLKETQDGFKFLTDQSYIDVLPEFRDSYPIKYIHAFESNRFIYFLTVQRETLDAQTFHTRIIRFCSVDSGLHSYMEMPLECILTEKRRKRSTREEVFNILQAAYVSKPGAHLAKQIGANLNDDILYGVFAQSKPDSAEPMNRSAVCAFPIKYVNEFFNKIVNKNNVRCLQHFYGPNHEHCFNRTLLRNSSGCEVRSDEYRTEFTTALQRVDLFMGQFNQVLLTSISTFIKGDLTIANLGTSEGRFMQVVVSRSGSSTPHVNFRLDSHPVSSEAIVEHPLNQNGYTLVVTGKKITKIPLNGLGCEHFQSCSQCLSAPPFVQCGWCHDKCVQLEECPSGTWTQEICLPTIYEVFPTSAPLEGGTMLTVCGWDFGFRRNNKFDLKKTRVFLGNESCTLTLSESTTNMLKCTVGPAVNEHFNISIIISNGRGTAQYSTFSYVDPVITSIFPSYGPKTGGTLLTLTGKYLNSGNSRHISIGGKTCTLKSVSDSILECYTPAQTIPTEFPIKLKIDLANREMNSFSYQEDPIVYAIHPTKSFISGGSTITAVGKNLNSVSVLRMVISVHETRRNFTVACHHRSNSEIICCTTPSLQQLNLQLPLKTKAFFMLDGIHSKYFDLIYVHNPVFKPFEKPVMISIGNENVLEIKGNDIDPEAVKGEVLKVGNKSCETIYSDSEAVLCKVPNDLLKLNNELNIEWKQAVSSTILGKVIVQPDQNFTGLIVGVISISIILLLLLGVFLWLKKRKQIKDLGSELVRYDARVHTPHLDRLVSARSVSPTTEMVSNESVDYRATFPEDQFPNSSQNGSCRQVQYPLTDLSPMLNSGDSDISSPLLQNTVHIDLSALNPELVQAVQHVVIGPSSLIVHFNEVIGRGHFGCVYHGTLLDSDDKKIHCAVKSLNRITDIGEVSQFLTEGIIMKDFSHPNVLSLLGICLRSEGSPLVVLPYMKHGDLRNFIRNETHNPTVKDLIGFGLQVAKGMKYLASKKFVHRDLAARNCMLDEKFTVKVADFGLARDMYDKEYYSVHNKTGAKLPVKWMALESLQTQKFTTKSDVWSFGVLLWELMTRGAPPYPDVNTFDITVYLLQGRRLLQPEYCPDPLYEVMLKCWHPKAELRPSFSELVSRISAIFSTFIGEHYVHVNATYVNVKCVAPYPSLLSSQDNIDGEGDT</sequence>
<protein>
    <recommendedName>
        <fullName>Hepatocyte growth factor receptor</fullName>
        <shortName>HGF receptor</shortName>
        <ecNumber>2.7.10.1</ecNumber>
    </recommendedName>
    <alternativeName>
        <fullName>HGF/SF receptor</fullName>
    </alternativeName>
    <alternativeName>
        <fullName>Proto-oncogene c-Met</fullName>
    </alternativeName>
    <alternativeName>
        <fullName>Scatter factor receptor</fullName>
        <shortName>SF receptor</shortName>
    </alternativeName>
    <alternativeName>
        <fullName>Tyrosine-protein kinase Met</fullName>
    </alternativeName>
</protein>
<gene>
    <name type="primary">MET</name>
</gene>